<protein>
    <recommendedName>
        <fullName evidence="1">Septation ring formation regulator EzrA</fullName>
    </recommendedName>
</protein>
<accession>Q92BB4</accession>
<keyword id="KW-0131">Cell cycle</keyword>
<keyword id="KW-0132">Cell division</keyword>
<keyword id="KW-1003">Cell membrane</keyword>
<keyword id="KW-0175">Coiled coil</keyword>
<keyword id="KW-0472">Membrane</keyword>
<keyword id="KW-0717">Septation</keyword>
<keyword id="KW-0812">Transmembrane</keyword>
<keyword id="KW-1133">Transmembrane helix</keyword>
<name>EZRA_LISIN</name>
<reference key="1">
    <citation type="journal article" date="2001" name="Science">
        <title>Comparative genomics of Listeria species.</title>
        <authorList>
            <person name="Glaser P."/>
            <person name="Frangeul L."/>
            <person name="Buchrieser C."/>
            <person name="Rusniok C."/>
            <person name="Amend A."/>
            <person name="Baquero F."/>
            <person name="Berche P."/>
            <person name="Bloecker H."/>
            <person name="Brandt P."/>
            <person name="Chakraborty T."/>
            <person name="Charbit A."/>
            <person name="Chetouani F."/>
            <person name="Couve E."/>
            <person name="de Daruvar A."/>
            <person name="Dehoux P."/>
            <person name="Domann E."/>
            <person name="Dominguez-Bernal G."/>
            <person name="Duchaud E."/>
            <person name="Durant L."/>
            <person name="Dussurget O."/>
            <person name="Entian K.-D."/>
            <person name="Fsihi H."/>
            <person name="Garcia-del Portillo F."/>
            <person name="Garrido P."/>
            <person name="Gautier L."/>
            <person name="Goebel W."/>
            <person name="Gomez-Lopez N."/>
            <person name="Hain T."/>
            <person name="Hauf J."/>
            <person name="Jackson D."/>
            <person name="Jones L.-M."/>
            <person name="Kaerst U."/>
            <person name="Kreft J."/>
            <person name="Kuhn M."/>
            <person name="Kunst F."/>
            <person name="Kurapkat G."/>
            <person name="Madueno E."/>
            <person name="Maitournam A."/>
            <person name="Mata Vicente J."/>
            <person name="Ng E."/>
            <person name="Nedjari H."/>
            <person name="Nordsiek G."/>
            <person name="Novella S."/>
            <person name="de Pablos B."/>
            <person name="Perez-Diaz J.-C."/>
            <person name="Purcell R."/>
            <person name="Remmel B."/>
            <person name="Rose M."/>
            <person name="Schlueter T."/>
            <person name="Simoes N."/>
            <person name="Tierrez A."/>
            <person name="Vazquez-Boland J.-A."/>
            <person name="Voss H."/>
            <person name="Wehland J."/>
            <person name="Cossart P."/>
        </authorList>
    </citation>
    <scope>NUCLEOTIDE SEQUENCE [LARGE SCALE GENOMIC DNA]</scope>
    <source>
        <strain>ATCC BAA-680 / CLIP 11262</strain>
    </source>
</reference>
<organism>
    <name type="scientific">Listeria innocua serovar 6a (strain ATCC BAA-680 / CLIP 11262)</name>
    <dbReference type="NCBI Taxonomy" id="272626"/>
    <lineage>
        <taxon>Bacteria</taxon>
        <taxon>Bacillati</taxon>
        <taxon>Bacillota</taxon>
        <taxon>Bacilli</taxon>
        <taxon>Bacillales</taxon>
        <taxon>Listeriaceae</taxon>
        <taxon>Listeria</taxon>
    </lineage>
</organism>
<gene>
    <name evidence="1" type="primary">ezrA</name>
    <name type="ordered locus">lin1636</name>
</gene>
<sequence length="571" mass="66526">MYYMLIGFIIVVIAVISAGYILKRKHYQRINELEETKIKLRERPVIDELSKVKKLKLTGQTEALFESWRSSWDEIETRLFPDLEEVLLEAEMNADRYRFRSATNTENDIEQMLVVIEKQMDQILGGLKELLISEEKNAKESRMTKEKFAELRREVLTRGFKLGETLPYVEAKLNSLAENLNRYDSLTDQADHLEAREIVISVQKEMAVIEAQMERIPSLLHETDTILPEEMNKLRAGYEEMVRKGYYLAQMELDKEISRMKTQIEKMKQNVINLDLDEAEEGIEELHNEIELFYDTLEHEAEARHFVKENHSPTSDKLKRQNTVSDALAEQITEVKQTYHVAEDDLAVYLKTSAKLSEAKENFEQLTALIASGEIAYSAAQDTLKEIDAALLSISSEQDNFAEELRSLRKDELEARDDAERMRRAIITLDRKMERERLPGLPEEYLSLRAHMGESIDALEKRLEEKPLNMKAVSQDWRIAEEDLTHLTEKAEEMMENVRLVEHVIQYANRYRLRNKELADELVQAENHFYNDYQYKKALEIAVTALEKVETGAFKKVEKAYESKVSVDDIE</sequence>
<proteinExistence type="inferred from homology"/>
<feature type="chain" id="PRO_0000172874" description="Septation ring formation regulator EzrA">
    <location>
        <begin position="1"/>
        <end position="571"/>
    </location>
</feature>
<feature type="topological domain" description="Extracellular" evidence="1">
    <location>
        <begin position="1"/>
        <end position="3"/>
    </location>
</feature>
<feature type="transmembrane region" description="Helical" evidence="1">
    <location>
        <begin position="4"/>
        <end position="22"/>
    </location>
</feature>
<feature type="topological domain" description="Cytoplasmic" evidence="1">
    <location>
        <begin position="23"/>
        <end position="571"/>
    </location>
</feature>
<feature type="coiled-coil region" evidence="1">
    <location>
        <begin position="170"/>
        <end position="215"/>
    </location>
</feature>
<feature type="coiled-coil region" evidence="1">
    <location>
        <begin position="248"/>
        <end position="299"/>
    </location>
</feature>
<feature type="coiled-coil region" evidence="1">
    <location>
        <begin position="326"/>
        <end position="374"/>
    </location>
</feature>
<feature type="coiled-coil region" evidence="1">
    <location>
        <begin position="400"/>
        <end position="437"/>
    </location>
</feature>
<feature type="coiled-coil region" evidence="1">
    <location>
        <begin position="478"/>
        <end position="529"/>
    </location>
</feature>
<comment type="function">
    <text evidence="1">Negative regulator of FtsZ ring formation; modulates the frequency and position of FtsZ ring formation. Inhibits FtsZ ring formation at polar sites. Interacts either with FtsZ or with one of its binding partners to promote depolymerization.</text>
</comment>
<comment type="subcellular location">
    <subcellularLocation>
        <location>Cell membrane</location>
        <topology>Single-pass membrane protein</topology>
    </subcellularLocation>
    <text evidence="1">Colocalized with FtsZ to the nascent septal site.</text>
</comment>
<comment type="similarity">
    <text evidence="1">Belongs to the EzrA family.</text>
</comment>
<evidence type="ECO:0000255" key="1">
    <source>
        <dbReference type="HAMAP-Rule" id="MF_00728"/>
    </source>
</evidence>
<dbReference type="EMBL" id="AL596169">
    <property type="protein sequence ID" value="CAC96867.1"/>
    <property type="molecule type" value="Genomic_DNA"/>
</dbReference>
<dbReference type="PIR" id="AC1637">
    <property type="entry name" value="AC1637"/>
</dbReference>
<dbReference type="RefSeq" id="WP_010991625.1">
    <property type="nucleotide sequence ID" value="NC_003212.1"/>
</dbReference>
<dbReference type="SMR" id="Q92BB4"/>
<dbReference type="STRING" id="272626.gene:17565967"/>
<dbReference type="KEGG" id="lin:lin1636"/>
<dbReference type="eggNOG" id="COG4477">
    <property type="taxonomic scope" value="Bacteria"/>
</dbReference>
<dbReference type="HOGENOM" id="CLU_034079_1_0_9"/>
<dbReference type="OrthoDB" id="1654473at2"/>
<dbReference type="Proteomes" id="UP000002513">
    <property type="component" value="Chromosome"/>
</dbReference>
<dbReference type="GO" id="GO:0005886">
    <property type="term" value="C:plasma membrane"/>
    <property type="evidence" value="ECO:0007669"/>
    <property type="project" value="UniProtKB-SubCell"/>
</dbReference>
<dbReference type="GO" id="GO:0005940">
    <property type="term" value="C:septin ring"/>
    <property type="evidence" value="ECO:0007669"/>
    <property type="project" value="InterPro"/>
</dbReference>
<dbReference type="GO" id="GO:0000917">
    <property type="term" value="P:division septum assembly"/>
    <property type="evidence" value="ECO:0007669"/>
    <property type="project" value="UniProtKB-KW"/>
</dbReference>
<dbReference type="GO" id="GO:0000921">
    <property type="term" value="P:septin ring assembly"/>
    <property type="evidence" value="ECO:0007669"/>
    <property type="project" value="InterPro"/>
</dbReference>
<dbReference type="HAMAP" id="MF_00728">
    <property type="entry name" value="EzrA"/>
    <property type="match status" value="1"/>
</dbReference>
<dbReference type="InterPro" id="IPR010379">
    <property type="entry name" value="EzrA"/>
</dbReference>
<dbReference type="NCBIfam" id="NF003408">
    <property type="entry name" value="PRK04778.1-2"/>
    <property type="match status" value="1"/>
</dbReference>
<dbReference type="Pfam" id="PF06160">
    <property type="entry name" value="EzrA"/>
    <property type="match status" value="1"/>
</dbReference>